<gene>
    <name type="primary">ribK</name>
    <name type="ordered locus">PYRAB13830</name>
    <name type="ORF">PAB0917</name>
</gene>
<name>RIFK_PYRAB</name>
<keyword id="KW-0285">Flavoprotein</keyword>
<keyword id="KW-0288">FMN</keyword>
<keyword id="KW-0418">Kinase</keyword>
<keyword id="KW-0460">Magnesium</keyword>
<keyword id="KW-0479">Metal-binding</keyword>
<keyword id="KW-0547">Nucleotide-binding</keyword>
<keyword id="KW-0808">Transferase</keyword>
<comment type="function">
    <text evidence="1">Catalyzes the CTP-dependent phosphorylation of riboflavin (vitamin B2) to form flavin mononucleotide (FMN).</text>
</comment>
<comment type="catalytic activity">
    <reaction>
        <text>riboflavin + CTP = CDP + FMN + H(+)</text>
        <dbReference type="Rhea" id="RHEA:25021"/>
        <dbReference type="ChEBI" id="CHEBI:15378"/>
        <dbReference type="ChEBI" id="CHEBI:37563"/>
        <dbReference type="ChEBI" id="CHEBI:57986"/>
        <dbReference type="ChEBI" id="CHEBI:58069"/>
        <dbReference type="ChEBI" id="CHEBI:58210"/>
        <dbReference type="EC" id="2.7.1.161"/>
    </reaction>
</comment>
<comment type="cofactor">
    <cofactor evidence="1">
        <name>Mg(2+)</name>
        <dbReference type="ChEBI" id="CHEBI:18420"/>
    </cofactor>
    <text evidence="1">Binds 1 Mg(2+) ion per subunit.</text>
</comment>
<comment type="pathway">
    <text>Cofactor biosynthesis; FMN biosynthesis; FMN from riboflavin (CTP route): step 1/1.</text>
</comment>
<comment type="similarity">
    <text evidence="2">Belongs to the archaeal riboflavin kinase family.</text>
</comment>
<sequence>MKMKTLFLLIKLAKMGAIGKEITVTMRELSRELDVSPQTVLRWLEELKEQGYIHKRESRKGTLVELTEKGINLLEKLYEEISTALYSGFIVGEVISGIGEGAYYVRQYAPLIREYLGFDPYPGTLNVRVLFPKTIFDALCTARPIIIPGFTRNGRTFGDVRAYRVRIDGIEGAIVIPSRTVHPPKIAEIIAPVKLRDALNLKDGDKVRIEVV</sequence>
<proteinExistence type="inferred from homology"/>
<dbReference type="EC" id="2.7.1.161"/>
<dbReference type="EMBL" id="AJ248287">
    <property type="protein sequence ID" value="CAB50288.1"/>
    <property type="molecule type" value="Genomic_DNA"/>
</dbReference>
<dbReference type="EMBL" id="HE613800">
    <property type="protein sequence ID" value="CCE70826.1"/>
    <property type="molecule type" value="Genomic_DNA"/>
</dbReference>
<dbReference type="PIR" id="C75049">
    <property type="entry name" value="C75049"/>
</dbReference>
<dbReference type="SMR" id="Q9UYX4"/>
<dbReference type="STRING" id="272844.PAB0917"/>
<dbReference type="KEGG" id="pab:PAB0917"/>
<dbReference type="PATRIC" id="fig|272844.11.peg.1470"/>
<dbReference type="eggNOG" id="arCOG01904">
    <property type="taxonomic scope" value="Archaea"/>
</dbReference>
<dbReference type="HOGENOM" id="CLU_088476_0_0_2"/>
<dbReference type="OrthoDB" id="30955at2157"/>
<dbReference type="PhylomeDB" id="Q9UYX4"/>
<dbReference type="UniPathway" id="UPA00276">
    <property type="reaction ID" value="UER00929"/>
</dbReference>
<dbReference type="Proteomes" id="UP000000810">
    <property type="component" value="Chromosome"/>
</dbReference>
<dbReference type="Proteomes" id="UP000009139">
    <property type="component" value="Chromosome"/>
</dbReference>
<dbReference type="GO" id="GO:0003700">
    <property type="term" value="F:DNA-binding transcription factor activity"/>
    <property type="evidence" value="ECO:0007669"/>
    <property type="project" value="InterPro"/>
</dbReference>
<dbReference type="GO" id="GO:0000287">
    <property type="term" value="F:magnesium ion binding"/>
    <property type="evidence" value="ECO:0007669"/>
    <property type="project" value="UniProtKB-UniRule"/>
</dbReference>
<dbReference type="GO" id="GO:0000166">
    <property type="term" value="F:nucleotide binding"/>
    <property type="evidence" value="ECO:0007669"/>
    <property type="project" value="UniProtKB-UniRule"/>
</dbReference>
<dbReference type="GO" id="GO:0008531">
    <property type="term" value="F:riboflavin kinase activity"/>
    <property type="evidence" value="ECO:0007669"/>
    <property type="project" value="InterPro"/>
</dbReference>
<dbReference type="GO" id="GO:0009398">
    <property type="term" value="P:FMN biosynthetic process"/>
    <property type="evidence" value="ECO:0007669"/>
    <property type="project" value="UniProtKB-UniRule"/>
</dbReference>
<dbReference type="GO" id="GO:0009231">
    <property type="term" value="P:riboflavin biosynthetic process"/>
    <property type="evidence" value="ECO:0007669"/>
    <property type="project" value="InterPro"/>
</dbReference>
<dbReference type="Gene3D" id="2.40.30.30">
    <property type="entry name" value="Riboflavin kinase-like"/>
    <property type="match status" value="1"/>
</dbReference>
<dbReference type="Gene3D" id="1.10.10.10">
    <property type="entry name" value="Winged helix-like DNA-binding domain superfamily/Winged helix DNA-binding domain"/>
    <property type="match status" value="1"/>
</dbReference>
<dbReference type="HAMAP" id="MF_01285">
    <property type="entry name" value="Riboflavin_kinase"/>
    <property type="match status" value="1"/>
</dbReference>
<dbReference type="InterPro" id="IPR000835">
    <property type="entry name" value="HTH_MarR-typ"/>
</dbReference>
<dbReference type="InterPro" id="IPR039063">
    <property type="entry name" value="RibK_CTP-dep"/>
</dbReference>
<dbReference type="InterPro" id="IPR023470">
    <property type="entry name" value="Riboflavin_kinase_archaeal"/>
</dbReference>
<dbReference type="InterPro" id="IPR023602">
    <property type="entry name" value="Riboflavin_kinase_CTP-dep"/>
</dbReference>
<dbReference type="InterPro" id="IPR023465">
    <property type="entry name" value="Riboflavin_kinase_dom_sf"/>
</dbReference>
<dbReference type="InterPro" id="IPR036388">
    <property type="entry name" value="WH-like_DNA-bd_sf"/>
</dbReference>
<dbReference type="InterPro" id="IPR036390">
    <property type="entry name" value="WH_DNA-bd_sf"/>
</dbReference>
<dbReference type="PANTHER" id="PTHR40706">
    <property type="entry name" value="RIBOFLAVIN KINASE"/>
    <property type="match status" value="1"/>
</dbReference>
<dbReference type="PANTHER" id="PTHR40706:SF1">
    <property type="entry name" value="RIBOFLAVIN KINASE"/>
    <property type="match status" value="1"/>
</dbReference>
<dbReference type="Pfam" id="PF01982">
    <property type="entry name" value="CTP-dep_RFKase"/>
    <property type="match status" value="1"/>
</dbReference>
<dbReference type="Pfam" id="PF12802">
    <property type="entry name" value="MarR_2"/>
    <property type="match status" value="1"/>
</dbReference>
<dbReference type="SUPFAM" id="SSF82114">
    <property type="entry name" value="Riboflavin kinase-like"/>
    <property type="match status" value="1"/>
</dbReference>
<dbReference type="SUPFAM" id="SSF46785">
    <property type="entry name" value="Winged helix' DNA-binding domain"/>
    <property type="match status" value="1"/>
</dbReference>
<protein>
    <recommendedName>
        <fullName>Riboflavin kinase</fullName>
        <shortName>RFK</shortName>
        <ecNumber>2.7.1.161</ecNumber>
    </recommendedName>
    <alternativeName>
        <fullName>CTP-dependent riboflavin kinase</fullName>
    </alternativeName>
    <alternativeName>
        <fullName>CTP:riboflavin 5'-phosphotransferase</fullName>
    </alternativeName>
    <alternativeName>
        <fullName>Flavokinase</fullName>
    </alternativeName>
</protein>
<reference key="1">
    <citation type="journal article" date="2003" name="Mol. Microbiol.">
        <title>An integrated analysis of the genome of the hyperthermophilic archaeon Pyrococcus abyssi.</title>
        <authorList>
            <person name="Cohen G.N."/>
            <person name="Barbe V."/>
            <person name="Flament D."/>
            <person name="Galperin M."/>
            <person name="Heilig R."/>
            <person name="Lecompte O."/>
            <person name="Poch O."/>
            <person name="Prieur D."/>
            <person name="Querellou J."/>
            <person name="Ripp R."/>
            <person name="Thierry J.-C."/>
            <person name="Van der Oost J."/>
            <person name="Weissenbach J."/>
            <person name="Zivanovic Y."/>
            <person name="Forterre P."/>
        </authorList>
    </citation>
    <scope>NUCLEOTIDE SEQUENCE [LARGE SCALE GENOMIC DNA]</scope>
    <source>
        <strain>GE5 / Orsay</strain>
    </source>
</reference>
<reference key="2">
    <citation type="journal article" date="2012" name="Curr. Microbiol.">
        <title>Re-annotation of two hyperthermophilic archaea Pyrococcus abyssi GE5 and Pyrococcus furiosus DSM 3638.</title>
        <authorList>
            <person name="Gao J."/>
            <person name="Wang J."/>
        </authorList>
    </citation>
    <scope>GENOME REANNOTATION</scope>
    <source>
        <strain>GE5 / Orsay</strain>
    </source>
</reference>
<evidence type="ECO:0000250" key="1"/>
<evidence type="ECO:0000305" key="2"/>
<organism>
    <name type="scientific">Pyrococcus abyssi (strain GE5 / Orsay)</name>
    <dbReference type="NCBI Taxonomy" id="272844"/>
    <lineage>
        <taxon>Archaea</taxon>
        <taxon>Methanobacteriati</taxon>
        <taxon>Methanobacteriota</taxon>
        <taxon>Thermococci</taxon>
        <taxon>Thermococcales</taxon>
        <taxon>Thermococcaceae</taxon>
        <taxon>Pyrococcus</taxon>
    </lineage>
</organism>
<feature type="chain" id="PRO_0000322098" description="Riboflavin kinase">
    <location>
        <begin position="1"/>
        <end position="212"/>
    </location>
</feature>
<feature type="region of interest" description="H-T-H motif-like">
    <location>
        <begin position="1"/>
        <end position="87"/>
    </location>
</feature>
<feature type="region of interest" description="Riboflavin kinase">
    <location>
        <begin position="88"/>
        <end position="212"/>
    </location>
</feature>
<feature type="binding site" evidence="1">
    <location>
        <begin position="97"/>
        <end position="102"/>
    </location>
    <ligand>
        <name>CDP</name>
        <dbReference type="ChEBI" id="CHEBI:58069"/>
    </ligand>
</feature>
<feature type="binding site" evidence="1">
    <location>
        <position position="124"/>
    </location>
    <ligand>
        <name>Mg(2+)</name>
        <dbReference type="ChEBI" id="CHEBI:18420"/>
    </ligand>
</feature>
<feature type="binding site" evidence="1">
    <location>
        <position position="126"/>
    </location>
    <ligand>
        <name>Mg(2+)</name>
        <dbReference type="ChEBI" id="CHEBI:18420"/>
    </ligand>
</feature>
<feature type="binding site" evidence="1">
    <location>
        <position position="180"/>
    </location>
    <ligand>
        <name>FMN</name>
        <dbReference type="ChEBI" id="CHEBI:58210"/>
    </ligand>
</feature>
<feature type="binding site" evidence="1">
    <location>
        <position position="188"/>
    </location>
    <ligand>
        <name>FMN</name>
        <dbReference type="ChEBI" id="CHEBI:58210"/>
    </ligand>
</feature>
<feature type="binding site" evidence="1">
    <location>
        <begin position="193"/>
        <end position="196"/>
    </location>
    <ligand>
        <name>CDP</name>
        <dbReference type="ChEBI" id="CHEBI:58069"/>
    </ligand>
</feature>
<accession>Q9UYX4</accession>
<accession>G8ZHI9</accession>